<reference key="1">
    <citation type="journal article" date="2005" name="J. Bacteriol.">
        <title>Whole-genome sequence analysis of Pseudomonas syringae pv. phaseolicola 1448A reveals divergence among pathovars in genes involved in virulence and transposition.</title>
        <authorList>
            <person name="Joardar V."/>
            <person name="Lindeberg M."/>
            <person name="Jackson R.W."/>
            <person name="Selengut J."/>
            <person name="Dodson R."/>
            <person name="Brinkac L.M."/>
            <person name="Daugherty S.C."/>
            <person name="DeBoy R.T."/>
            <person name="Durkin A.S."/>
            <person name="Gwinn Giglio M."/>
            <person name="Madupu R."/>
            <person name="Nelson W.C."/>
            <person name="Rosovitz M.J."/>
            <person name="Sullivan S.A."/>
            <person name="Crabtree J."/>
            <person name="Creasy T."/>
            <person name="Davidsen T.M."/>
            <person name="Haft D.H."/>
            <person name="Zafar N."/>
            <person name="Zhou L."/>
            <person name="Halpin R."/>
            <person name="Holley T."/>
            <person name="Khouri H.M."/>
            <person name="Feldblyum T.V."/>
            <person name="White O."/>
            <person name="Fraser C.M."/>
            <person name="Chatterjee A.K."/>
            <person name="Cartinhour S."/>
            <person name="Schneider D."/>
            <person name="Mansfield J.W."/>
            <person name="Collmer A."/>
            <person name="Buell R."/>
        </authorList>
    </citation>
    <scope>NUCLEOTIDE SEQUENCE [LARGE SCALE GENOMIC DNA]</scope>
    <source>
        <strain>1448A / Race 6</strain>
    </source>
</reference>
<accession>Q48DI3</accession>
<name>AROQ_PSE14</name>
<gene>
    <name evidence="1" type="primary">aroQ</name>
    <name type="ordered locus">PSPPH_4442</name>
</gene>
<organism>
    <name type="scientific">Pseudomonas savastanoi pv. phaseolicola (strain 1448A / Race 6)</name>
    <name type="common">Pseudomonas syringae pv. phaseolicola (strain 1448A / Race 6)</name>
    <dbReference type="NCBI Taxonomy" id="264730"/>
    <lineage>
        <taxon>Bacteria</taxon>
        <taxon>Pseudomonadati</taxon>
        <taxon>Pseudomonadota</taxon>
        <taxon>Gammaproteobacteria</taxon>
        <taxon>Pseudomonadales</taxon>
        <taxon>Pseudomonadaceae</taxon>
        <taxon>Pseudomonas</taxon>
    </lineage>
</organism>
<comment type="function">
    <text evidence="1">Catalyzes a trans-dehydration via an enolate intermediate.</text>
</comment>
<comment type="catalytic activity">
    <reaction evidence="1">
        <text>3-dehydroquinate = 3-dehydroshikimate + H2O</text>
        <dbReference type="Rhea" id="RHEA:21096"/>
        <dbReference type="ChEBI" id="CHEBI:15377"/>
        <dbReference type="ChEBI" id="CHEBI:16630"/>
        <dbReference type="ChEBI" id="CHEBI:32364"/>
        <dbReference type="EC" id="4.2.1.10"/>
    </reaction>
</comment>
<comment type="pathway">
    <text evidence="1">Metabolic intermediate biosynthesis; chorismate biosynthesis; chorismate from D-erythrose 4-phosphate and phosphoenolpyruvate: step 3/7.</text>
</comment>
<comment type="subunit">
    <text evidence="1">Homododecamer.</text>
</comment>
<comment type="similarity">
    <text evidence="1">Belongs to the type-II 3-dehydroquinase family.</text>
</comment>
<evidence type="ECO:0000255" key="1">
    <source>
        <dbReference type="HAMAP-Rule" id="MF_00169"/>
    </source>
</evidence>
<protein>
    <recommendedName>
        <fullName evidence="1">3-dehydroquinate dehydratase</fullName>
        <shortName evidence="1">3-dehydroquinase</shortName>
        <ecNumber evidence="1">4.2.1.10</ecNumber>
    </recommendedName>
    <alternativeName>
        <fullName evidence="1">Type II DHQase</fullName>
    </alternativeName>
</protein>
<keyword id="KW-0028">Amino-acid biosynthesis</keyword>
<keyword id="KW-0057">Aromatic amino acid biosynthesis</keyword>
<keyword id="KW-0456">Lyase</keyword>
<proteinExistence type="inferred from homology"/>
<dbReference type="EC" id="4.2.1.10" evidence="1"/>
<dbReference type="EMBL" id="CP000058">
    <property type="protein sequence ID" value="AAZ33900.1"/>
    <property type="molecule type" value="Genomic_DNA"/>
</dbReference>
<dbReference type="RefSeq" id="WP_002555369.1">
    <property type="nucleotide sequence ID" value="NC_005773.3"/>
</dbReference>
<dbReference type="SMR" id="Q48DI3"/>
<dbReference type="GeneID" id="69861454"/>
<dbReference type="KEGG" id="psp:PSPPH_4442"/>
<dbReference type="eggNOG" id="COG0757">
    <property type="taxonomic scope" value="Bacteria"/>
</dbReference>
<dbReference type="HOGENOM" id="CLU_090968_1_0_6"/>
<dbReference type="UniPathway" id="UPA00053">
    <property type="reaction ID" value="UER00086"/>
</dbReference>
<dbReference type="Proteomes" id="UP000000551">
    <property type="component" value="Chromosome"/>
</dbReference>
<dbReference type="GO" id="GO:0003855">
    <property type="term" value="F:3-dehydroquinate dehydratase activity"/>
    <property type="evidence" value="ECO:0007669"/>
    <property type="project" value="UniProtKB-UniRule"/>
</dbReference>
<dbReference type="GO" id="GO:0008652">
    <property type="term" value="P:amino acid biosynthetic process"/>
    <property type="evidence" value="ECO:0007669"/>
    <property type="project" value="UniProtKB-KW"/>
</dbReference>
<dbReference type="GO" id="GO:0009073">
    <property type="term" value="P:aromatic amino acid family biosynthetic process"/>
    <property type="evidence" value="ECO:0007669"/>
    <property type="project" value="UniProtKB-KW"/>
</dbReference>
<dbReference type="GO" id="GO:0009423">
    <property type="term" value="P:chorismate biosynthetic process"/>
    <property type="evidence" value="ECO:0007669"/>
    <property type="project" value="UniProtKB-UniRule"/>
</dbReference>
<dbReference type="GO" id="GO:0019631">
    <property type="term" value="P:quinate catabolic process"/>
    <property type="evidence" value="ECO:0007669"/>
    <property type="project" value="TreeGrafter"/>
</dbReference>
<dbReference type="CDD" id="cd00466">
    <property type="entry name" value="DHQase_II"/>
    <property type="match status" value="1"/>
</dbReference>
<dbReference type="Gene3D" id="3.40.50.9100">
    <property type="entry name" value="Dehydroquinase, class II"/>
    <property type="match status" value="1"/>
</dbReference>
<dbReference type="HAMAP" id="MF_00169">
    <property type="entry name" value="AroQ"/>
    <property type="match status" value="1"/>
</dbReference>
<dbReference type="InterPro" id="IPR001874">
    <property type="entry name" value="DHquinase_II"/>
</dbReference>
<dbReference type="InterPro" id="IPR018509">
    <property type="entry name" value="DHquinase_II_CS"/>
</dbReference>
<dbReference type="InterPro" id="IPR036441">
    <property type="entry name" value="DHquinase_II_sf"/>
</dbReference>
<dbReference type="NCBIfam" id="TIGR01088">
    <property type="entry name" value="aroQ"/>
    <property type="match status" value="1"/>
</dbReference>
<dbReference type="NCBIfam" id="NF003804">
    <property type="entry name" value="PRK05395.1-1"/>
    <property type="match status" value="1"/>
</dbReference>
<dbReference type="NCBIfam" id="NF003805">
    <property type="entry name" value="PRK05395.1-2"/>
    <property type="match status" value="1"/>
</dbReference>
<dbReference type="NCBIfam" id="NF003806">
    <property type="entry name" value="PRK05395.1-3"/>
    <property type="match status" value="1"/>
</dbReference>
<dbReference type="NCBIfam" id="NF003807">
    <property type="entry name" value="PRK05395.1-4"/>
    <property type="match status" value="1"/>
</dbReference>
<dbReference type="PANTHER" id="PTHR21272">
    <property type="entry name" value="CATABOLIC 3-DEHYDROQUINASE"/>
    <property type="match status" value="1"/>
</dbReference>
<dbReference type="PANTHER" id="PTHR21272:SF3">
    <property type="entry name" value="CATABOLIC 3-DEHYDROQUINASE"/>
    <property type="match status" value="1"/>
</dbReference>
<dbReference type="Pfam" id="PF01220">
    <property type="entry name" value="DHquinase_II"/>
    <property type="match status" value="1"/>
</dbReference>
<dbReference type="PIRSF" id="PIRSF001399">
    <property type="entry name" value="DHquinase_II"/>
    <property type="match status" value="1"/>
</dbReference>
<dbReference type="SUPFAM" id="SSF52304">
    <property type="entry name" value="Type II 3-dehydroquinate dehydratase"/>
    <property type="match status" value="1"/>
</dbReference>
<dbReference type="PROSITE" id="PS01029">
    <property type="entry name" value="DEHYDROQUINASE_II"/>
    <property type="match status" value="1"/>
</dbReference>
<feature type="chain" id="PRO_1000023496" description="3-dehydroquinate dehydratase">
    <location>
        <begin position="1"/>
        <end position="150"/>
    </location>
</feature>
<feature type="active site" description="Proton acceptor" evidence="1">
    <location>
        <position position="23"/>
    </location>
</feature>
<feature type="active site" description="Proton donor" evidence="1">
    <location>
        <position position="101"/>
    </location>
</feature>
<feature type="binding site" evidence="1">
    <location>
        <position position="75"/>
    </location>
    <ligand>
        <name>substrate</name>
    </ligand>
</feature>
<feature type="binding site" evidence="1">
    <location>
        <position position="81"/>
    </location>
    <ligand>
        <name>substrate</name>
    </ligand>
</feature>
<feature type="binding site" evidence="1">
    <location>
        <position position="88"/>
    </location>
    <ligand>
        <name>substrate</name>
    </ligand>
</feature>
<feature type="binding site" evidence="1">
    <location>
        <begin position="102"/>
        <end position="103"/>
    </location>
    <ligand>
        <name>substrate</name>
    </ligand>
</feature>
<feature type="binding site" evidence="1">
    <location>
        <position position="112"/>
    </location>
    <ligand>
        <name>substrate</name>
    </ligand>
</feature>
<feature type="site" description="Transition state stabilizer" evidence="1">
    <location>
        <position position="18"/>
    </location>
</feature>
<sequence>MATILVLHGPNLNLLGTREPGVYGTITLPQINQDLEQRARDAGHHLMYLQSNAEYELIDRIHAARGEGVDFILINPAAFTHTSVAIRDALMGVSIPFIEVHLSNVHKREPFRHHSYFSDVAVGVICGLGASGYRLALEAALEQLAASAKP</sequence>